<protein>
    <recommendedName>
        <fullName>Replicase polyprotein 1ab</fullName>
    </recommendedName>
    <alternativeName>
        <fullName>ORF1ab polyprotein</fullName>
    </alternativeName>
    <component>
        <recommendedName>
            <fullName>Nsp1</fullName>
            <ecNumber>3.4.22.-</ecNumber>
        </recommendedName>
    </component>
    <component>
        <recommendedName>
            <fullName>Nsp1-alpha papain-like cysteine proteinase</fullName>
            <ecNumber>3.4.22.-</ecNumber>
        </recommendedName>
        <alternativeName>
            <fullName>PCP1-alpha</fullName>
        </alternativeName>
    </component>
    <component>
        <recommendedName>
            <fullName>Nsp1-beta papain-like cysteine proteinase</fullName>
            <ecNumber>3.4.22.-</ecNumber>
        </recommendedName>
        <alternativeName>
            <fullName>PCP1-beta</fullName>
        </alternativeName>
    </component>
    <component>
        <recommendedName>
            <fullName>Nsp2 cysteine proteinase</fullName>
            <ecNumber>3.4.19.12</ecNumber>
            <ecNumber>3.4.22.-</ecNumber>
        </recommendedName>
        <alternativeName>
            <fullName>CP2</fullName>
            <shortName>CP</shortName>
        </alternativeName>
    </component>
    <component>
        <recommendedName>
            <fullName>Non-structural protein 3</fullName>
            <shortName>Nsp3</shortName>
        </recommendedName>
    </component>
    <component>
        <recommendedName>
            <fullName>Serine protease nsp4</fullName>
            <shortName>3CLSP</shortName>
            <ecNumber>3.4.21.-</ecNumber>
        </recommendedName>
        <alternativeName>
            <fullName>3C-like serine proteinase</fullName>
        </alternativeName>
        <alternativeName>
            <fullName>Nsp4</fullName>
        </alternativeName>
    </component>
    <component>
        <recommendedName>
            <fullName>Non-structural protein 5-6-7</fullName>
            <shortName>Nsp5-6-7</shortName>
        </recommendedName>
    </component>
    <component>
        <recommendedName>
            <fullName>Non-structural protein 5</fullName>
            <shortName>Nsp5</shortName>
        </recommendedName>
    </component>
    <component>
        <recommendedName>
            <fullName>Non-structural protein 6</fullName>
            <shortName>Nsp6</shortName>
        </recommendedName>
    </component>
    <component>
        <recommendedName>
            <fullName>Non-structural protein 7-alpha</fullName>
            <shortName>Nsp7-alpha</shortName>
        </recommendedName>
    </component>
    <component>
        <recommendedName>
            <fullName>Non-structural protein 7-beta</fullName>
            <shortName>Nsp7-beta</shortName>
        </recommendedName>
    </component>
    <component>
        <recommendedName>
            <fullName>Non-structural protein 8</fullName>
            <shortName>Nsp8</shortName>
        </recommendedName>
    </component>
    <component>
        <recommendedName>
            <fullName>RNA-directed RNA polymerase</fullName>
            <shortName>Pol</shortName>
            <shortName>RdRp</shortName>
            <ecNumber>2.7.7.48</ecNumber>
        </recommendedName>
        <alternativeName>
            <fullName>Nsp9</fullName>
        </alternativeName>
    </component>
    <component>
        <recommendedName>
            <fullName>Helicase nsp10</fullName>
            <shortName>Hel</shortName>
            <ecNumber>3.6.4.12</ecNumber>
            <ecNumber>3.6.4.13</ecNumber>
        </recommendedName>
        <alternativeName>
            <fullName>Nsp10</fullName>
        </alternativeName>
    </component>
    <component>
        <recommendedName>
            <fullName>Uridylate-specific endoribonuclease nsp11</fullName>
            <ecNumber>4.6.1.-</ecNumber>
        </recommendedName>
        <alternativeName>
            <fullName>Non-structural protein 11</fullName>
            <shortName>Nsp11</shortName>
        </alternativeName>
    </component>
    <component>
        <recommendedName>
            <fullName>Non-structural protein 12</fullName>
            <shortName>Nsp12</shortName>
        </recommendedName>
    </component>
</protein>
<evidence type="ECO:0000250" key="1"/>
<evidence type="ECO:0000250" key="2">
    <source>
        <dbReference type="UniProtKB" id="A0MD28"/>
    </source>
</evidence>
<evidence type="ECO:0000250" key="3">
    <source>
        <dbReference type="UniProtKB" id="A6YQT5"/>
    </source>
</evidence>
<evidence type="ECO:0000250" key="4">
    <source>
        <dbReference type="UniProtKB" id="P0C6X7"/>
    </source>
</evidence>
<evidence type="ECO:0000250" key="5">
    <source>
        <dbReference type="UniProtKB" id="P19811"/>
    </source>
</evidence>
<evidence type="ECO:0000250" key="6">
    <source>
        <dbReference type="UniProtKB" id="Q04561"/>
    </source>
</evidence>
<evidence type="ECO:0000255" key="7"/>
<evidence type="ECO:0000255" key="8">
    <source>
        <dbReference type="PROSITE-ProRule" id="PRU00539"/>
    </source>
</evidence>
<evidence type="ECO:0000255" key="9">
    <source>
        <dbReference type="PROSITE-ProRule" id="PRU00826"/>
    </source>
</evidence>
<evidence type="ECO:0000255" key="10">
    <source>
        <dbReference type="PROSITE-ProRule" id="PRU00871"/>
    </source>
</evidence>
<evidence type="ECO:0000255" key="11">
    <source>
        <dbReference type="PROSITE-ProRule" id="PRU00872"/>
    </source>
</evidence>
<evidence type="ECO:0000255" key="12">
    <source>
        <dbReference type="PROSITE-ProRule" id="PRU00873"/>
    </source>
</evidence>
<evidence type="ECO:0000255" key="13">
    <source>
        <dbReference type="PROSITE-ProRule" id="PRU00985"/>
    </source>
</evidence>
<evidence type="ECO:0000255" key="14">
    <source>
        <dbReference type="PROSITE-ProRule" id="PRU01292"/>
    </source>
</evidence>
<evidence type="ECO:0000255" key="15">
    <source>
        <dbReference type="PROSITE-ProRule" id="PRU01303"/>
    </source>
</evidence>
<evidence type="ECO:0000255" key="16">
    <source>
        <dbReference type="PROSITE-ProRule" id="PRU01306"/>
    </source>
</evidence>
<evidence type="ECO:0000256" key="17">
    <source>
        <dbReference type="SAM" id="MobiDB-lite"/>
    </source>
</evidence>
<evidence type="ECO:0000269" key="18">
    <source>
    </source>
</evidence>
<evidence type="ECO:0000269" key="19">
    <source>
    </source>
</evidence>
<evidence type="ECO:0000269" key="20">
    <source>
    </source>
</evidence>
<evidence type="ECO:0000269" key="21">
    <source>
    </source>
</evidence>
<evidence type="ECO:0000269" key="22">
    <source>
    </source>
</evidence>
<evidence type="ECO:0000305" key="23"/>
<proteinExistence type="evidence at protein level"/>
<name>RPOA_PRRSR</name>
<reference key="1">
    <citation type="journal article" date="1999" name="J. Virol.">
        <title>Porcine reproductive and respiratory syndrome virus comparison: divergent evolution on two continents.</title>
        <authorList>
            <person name="Nelsen C.J."/>
            <person name="Murtaugh M.P."/>
            <person name="Faaberg K.S."/>
        </authorList>
    </citation>
    <scope>NUCLEOTIDE SEQUENCE [GENOMIC RNA]</scope>
</reference>
<reference key="2">
    <citation type="submission" date="1999-04" db="EMBL/GenBank/DDBJ databases">
        <authorList>
            <person name="Murtaugh M.P."/>
            <person name="Faaberg K.S."/>
            <person name="Nelsen C.J."/>
        </authorList>
    </citation>
    <scope>SEQUENCE REVISION</scope>
</reference>
<reference key="3">
    <citation type="journal article" date="2003" name="J. Virol.">
        <title>Generation of an infectious clone of VR-2332, a highly virulent North American-type isolate of porcine reproductive and respiratory syndrome virus.</title>
        <authorList>
            <person name="Nielsen H.S."/>
            <person name="Liu G."/>
            <person name="Nielsen J."/>
            <person name="Oleksiewicz M.B."/>
            <person name="Botner A."/>
            <person name="Storgaard T."/>
            <person name="Faaberg K.S."/>
        </authorList>
    </citation>
    <scope>NUCLEOTIDE SEQUENCE [GENOMIC RNA]</scope>
    <source>
        <strain>Infectious clone VR-2332</strain>
    </source>
</reference>
<reference key="4">
    <citation type="journal article" date="2007" name="Cell Host Microbe">
        <title>Ovarian tumor domain-containing viral proteases evade ubiquitin- and ISG15-dependent innate immune responses.</title>
        <authorList>
            <person name="Frias-Staheli N."/>
            <person name="Giannakopoulos N.V."/>
            <person name="Kikkert M."/>
            <person name="Taylor S.L."/>
            <person name="Bridgen A."/>
            <person name="Paragas J."/>
            <person name="Richt J.A."/>
            <person name="Rowland R.R."/>
            <person name="Schmaljohn C.S."/>
            <person name="Lenschow D.J."/>
            <person name="Snijder E.J."/>
            <person name="Garcia-Sastre A."/>
            <person name="Virgin H.W."/>
        </authorList>
    </citation>
    <scope>FUNCTION (NSP2 CYSTEINE PROTEINASE)</scope>
</reference>
<reference key="5">
    <citation type="journal article" date="2010" name="Virology">
        <title>Nonstructural protein 1alpha subunit-based inhibition of NF-kappaB activation and suppression of interferon-beta production by porcine reproductive and respiratory syndrome virus.</title>
        <authorList>
            <person name="Song C."/>
            <person name="Krell P."/>
            <person name="Yoo D."/>
        </authorList>
    </citation>
    <scope>FUNCTION (NSP1-ALPHA PAPAIN-LIKE CYSTEINE PROTEINASE)</scope>
    <scope>SUBCELLULAR LOCATION (NSP1-ALPHA PAPAIN-LIKE CYSTEINE PROTEINASE)</scope>
</reference>
<reference key="6">
    <citation type="journal article" date="2010" name="Virology">
        <title>Identification of two auto-cleavage products of nonstructural protein 1 (nsp1) in porcine reproductive and respiratory syndrome virus infected cells: nsp1 function as interferon antagonist.</title>
        <authorList>
            <person name="Chen Z."/>
            <person name="Lawson S."/>
            <person name="Sun Z."/>
            <person name="Zhou X."/>
            <person name="Guan X."/>
            <person name="Christopher-Hennings J."/>
            <person name="Nelson E.A."/>
            <person name="Fang Y."/>
        </authorList>
    </citation>
    <scope>FUNCTION (NSP1-ALPHA PAPAIN-LIKE CYSTEINE)</scope>
    <scope>FUNCTION (NSP1-BETA PAPAIN-LIKE CYSTEINE)</scope>
    <scope>PROTEOLYTIC PROCESSING (REPLICASE POLYPROTEIN 1AB)</scope>
    <scope>PROTEIN SEQUENCE OF 181-190 AND 384-393</scope>
    <source>
        <strain>Isolate SD23983</strain>
    </source>
</reference>
<reference key="7">
    <citation type="journal article" date="2011" name="DNA Cell Biol.">
        <title>The nonstructural protein 1 papain-like cysteine protease was necessary for porcine reproductive and respiratory syndrome virus nonstructural protein 1 to inhibit interferon-beta induction.</title>
        <authorList>
            <person name="Shi X."/>
            <person name="Zhang G."/>
            <person name="Wang L."/>
            <person name="Li X."/>
            <person name="Zhi Y."/>
            <person name="Wang F."/>
            <person name="Fan J."/>
            <person name="Deng R."/>
        </authorList>
    </citation>
    <scope>FUNCTION (NSP1-ALPHA PAPAIN-LIKE CYSTEINE)</scope>
    <scope>MUTAGENESIS OF CYS-76; HIS-146 AND CYS-270</scope>
    <source>
        <strain>BJ-4</strain>
    </source>
</reference>
<reference key="8">
    <citation type="journal article" date="2013" name="J. Virol.">
        <title>Porcine reproductive and respiratory syndrome virus Nsp1beta inhibits interferon-activated JAK/STAT signal transduction by inducing karyopherin-alpha1 degradation.</title>
        <authorList>
            <person name="Wang R."/>
            <person name="Nan Y."/>
            <person name="Yu Y."/>
            <person name="Zhang Y.J."/>
        </authorList>
    </citation>
    <scope>FUNCTION (NSP1-BETA PAPAIN-LIKE CYSTEINE PROTEINASE)</scope>
</reference>
<reference key="9">
    <citation type="journal article" date="2015" name="Virology">
        <title>Porcine reproductive and respiratory syndrome virus nonstructural protein 2 (nsp2) topology and selective isoform integration in artificial membranes.</title>
        <authorList>
            <person name="Kappes M.A."/>
            <person name="Miller C.L."/>
            <person name="Faaberg K.S."/>
        </authorList>
    </citation>
    <scope>TOPOLOGY (NSP2 CYSTEINE PROTEINASE)</scope>
</reference>
<sequence>MSGILDRCTCTPNARVFMAEGQVYCTRCLSARSLLPLNLQVSELGVLGLFYRPEEPLRWTLPRAFPTVECSPAGACWLSAIFPIARMTSGNLNFQQRMVRVAAELYRAGQLTPAVLKALQVYERGCRWYPIVGPVPGVAVFANSLHVSDKPFPGATHVLTNLPLPQRPKPEDFCPFECAMATVYDIGHDAVMYVAERKVSWAPRGGDEVKFEAVPGELKLIANRLRTSFPPHHTVDMSKFAFTAPGCGVSMRVERQHGCLPADTVPEGNCWWSLFDLLPLEVQNKEIRHANQFGYQTKHGVSGKYLQRRLQVNGLRAVTDLNGPIVVQYFSVKESWIRHLKLAGEPSYSGFEDLLRIRVEPNTSPLADKEEKIFRFGSHKWYGAGKRARKARSCATATVAGRALSVRETRQAKEHEVAGANKAEHLKHYSPPAEGNCGWHCISAIANRMVNSKFETTLPERVRPPDDWATDEDLVNAIQILRLPAALDRNGACTSAKYVLKLEGEHWTVTVTPGMSPSLLPLECVQGCCGHKGGLGSPDAVEVSGFDPACLDRLAEVMHLPSSAIPAALAEMSGDSDRSASPVTTVWTVSQFFARHSGGNHPDQVRLGKIISLCQVIEDCCCSQNKTNRVTPEEVAAKIDLYLRGATNLEECLARLEKARPPRVIDTSFDWDVVLPGVEAATQTIKLPQVNQCRALVPVVTQKSLDNNSVPLTAFSLANYYYRAQGDEVRHRERLTAVLSKLEKVVREEYGLMPTEPGPRPTLPRGLDELKDQMEEDLLKLANAQTTSDMMAWAVEQVDLKTWVKNYPRWTPPPPPPKVQPRKTKPVKSLPERKPVPAPRRKVGSDCGSPVSLGGDVPNSWEDLAVSSPFDLPTPPEPATPSSELVIVSSPQCIFRPATPLSEPAPIPAPRGTVSRPVTPLSEPIPVPAPRRKFQQVKRLSSAAAIPPYQDEPLDLSASSQTEYEASPPAPPQSGGVLGVEGHEAEETLSEISDMSGNIKPASVSSSSSLSSVRITRPKYSAQAIIDSGGPCSGHLQEVKETCLSVMREACDATKLDDPATQEWLSRMWDRVDMLTWRNTSVYQAICTLDGRLKFLPKMILETPPPYPCEFVMMPHTPAPSVGAESDLTIGSVATEDVPRILEKIENVGEMANQGPLAFSEDKPVDDQLVNDPRISSRRPDESTSAPSAGTGGAGSFTDLPPSDGADADGGGPFRTVKRKAERLFDQLSRQVFDLVSHLPVFFSRLFYPGGGYSPGDWGFAAFTLLCLFLCYSYPAFGIAPLLGVFSGSSRRVRMGVFGCWLAFAVGLFKPVSDPVGAACEFDSPECRNILHSFELLKPWDPVRSLVVGPVGLGLAILGRLLGGARCIWHFLLRLGIVADCILAGAYVLSQGRCKKCWGSCIRTAPNEVAFNVFPFTRATRSSLIDLCDRFCAPKGMDPIFLATGWRGCWAGRSPIEQPSEKPIAFAQLDEKKITARTVVAQPYDPNQAVKCLRVLQSGGAMVAKAVPKVVKVSAVPFRAPFFPTGVKVDPDCRVVVDPDTFTAALRSGYSTTNLVLGVGDFAQLNGLKIRQISKPSGGGPHLMAALHVACSMALHMLAGIYVTAVGSCGTGTNDPWCANPFAVPGYGPGSLCTSRLCISQHGLTLPLTALVAGFGIQEIALVVLIFVSIGGMAHRLSCKADMLCVLLAIASYVWVPLTWLLCVFPCWLRCFSLHPLTILWLVFFLISVNMPSGILAMVLLVSLWLLGRYTNVAGLVTPYDIHHYTSGPRGVAALATAPDGTYLAAVRRAALTGRTMLFTPSQLGSLLEGAFRTRKPSLNTVNVIGSSMGSGGVFTIDGKVKCVTAAHVLTGNSARVSGVGFNQMLDFDVKGDFAIADCPNWQGAAPKTQFCTDGWTGRAYWLTSSGVEPGVIGKGFAFCFTACGDSGSPVITEAGELVGVHTGSNKQGGGIVTRPSGQFCNVAPIKLSELSEFFAGPKVPLGDVKVGSHIIKDISEVPSDLCALLAAKPELEGGLSTVQLLCVFFLLWRMMGHAWTPLVAVSFFILNEVLPAVLVRSVFSFGMFVLSWLTPWSAQVLMIRLLTAALNRNRWSLAFFSLGAVTGFVADLAATQGHPLQAVMNLSTYAFLPRMMVVTSPVPVITCGVVHLLAIILYLFKYRGPHHILVGDGVFSAAFFLRYFAEGKLREGVSQSCGMNHESLTGALAMRLNDEDLDFLMKWTDFKCFVSASNMRNAAGQFIEAAYAKALRVELAQLVQVDKVRGTLAKLEAFADTVAPQLSPGDIVVALGHTPVGSIFDLKVGSTKHTLQAIETRVLAGSKMTVARVVDPTPTPPPAPVPIPLPPKVLENGPNAWGDEDRLNKKKRRRMEALGIYVMGGKKYQKFWDKNSGDVFYEEVHNNTDEWECLRVGDPADFDPEKGTLCGHVTIENKAYHVYTSPSGKKFLVPVNPENGRVQWEAAKLSVEQALGMMNVDGELTAKELEKLKRIIDKLQGLTKEQCLNCLAASDLTRCGRGGLVVTETAVKIVKFHNRTFTLGPVNLKVASEVELKDAVEHNQHPVARPIDGGVVLLRSAVPSLIDVLISGADASPKLLAHHGPGNTGIDGTLWDFESEATKEEVALSAQIIQACDIRRGDAPEIGLPYKLYPVRGNPERVKGVLQNTRFGDIPYKTPSDTGSPVHAAACLTPNATPVTDGRSVLATTMPPGFELYVPTIPASVLDYLDSRPDCPKQLTEHGCEDAALKDLSKYDLSTQGFVLPGVLRLVRKYLFAHVGKCPPVHRPSTYPAKNSMAGINGNRFPTKDIQSVPEIDVLCAQAVRENWQTVTPCTLKKQYCGKKKTRTILGTNNFIALAHRAVLSGVTQGFMKKAFNSPIALGKNKFKELQTPVLGRCLEADLASCDRSTPAIVRWFAANLLYELACAEEHLPSYVLNCCHDLLVTQSGAVTKRGGLSSGDPITSVSNTIYSLVIYAQHMVLSYFKSGHPHGLLFLQDQLKFEDMLKVQPLIVYSDDLVLYAESPTMPNYHWWVEHLNLMLGFQTDPKKTAITDSPSFLGCRIINGRQLVPNRDRILAALAYHMKASNVSEYYASAAAILMDSCACLEYDPEWFEELVVGIAQCARKDGYSFPGTPFFMSMWEKLRSNYEGKKSRVCGYCGAPAPYATACGLDVCIYHTHFHQHCPVTIWCGHPAGSGSCSECKSPVGKGTSPLDEVLEQVPYKPPRTVIMHVEQGLTPLDPGRYQTRRGLVSVRRGIRGNEVGLPDGDYASTALLPTCKEINMVAVASNVLRSRFIIGPPGAGKTYWLLQQVQDGDVIYTPTHQTMLDMIRALGTCRFNVPAGTTLQFPVPSRTGPWVRILAGGWCPGKNSFLDEAAYCNHLDVLRLLSKTTLTCLGDFKQLHPVGFDSHCYVFDIMPQTQLKTIWRFGQNICDAIQPDYRDKLMSMVNTTRVTYVEKPVRYGQVLTPYHRDREDDAITIDSSQGATFDVVTLHLPTKDSLNRQRALVAITRARHAIFVYDPHRQLQGLFDLPAKGTPVNLAVHCDGQLIVLDRNNKECTVAQALGNGDKFRATDKRVVDSLRAICADLEGSSSPLPKVAHNLGFYFSPDLTQFAKLPVELAPHWPVVSTQNNEKWPDRLVASLRPIHKYSRACIGAGYMVGPSVFLGTPGVVSYYLTKFVKGGAQVLPETVFSTGRIEVDCREYLDDREREVAASLPHGFIGDVKGTTVGGCHHVTSRYLPRVLPKESVAVVGVSSPGKAAKALCTLTDVYLPDLEAYLHPETQSKCWKMMLDFKEVRLMVWKDKTAYFQLEGRYFTWYQLASYASYIRVPVNSTVYLDPCMGPALCNRRVVGSTHWGADLAVTPYDYGAKIILSSAYHGEMPPGYKILACAEFSLDDPVKYKHTWGFESDTAYLYEFTGNGEDWEDYNDAFRARQEGKIYKATATSLKFYFPPGPVIEPTLGLN</sequence>
<feature type="chain" id="PRO_0000036696" description="Replicase polyprotein 1ab">
    <location>
        <begin position="1"/>
        <end position="3960"/>
    </location>
</feature>
<feature type="chain" id="PRO_0000410829" description="Nsp1" evidence="1">
    <location>
        <begin position="1"/>
        <end position="382"/>
    </location>
</feature>
<feature type="chain" id="PRO_0000036698" description="Nsp1-alpha papain-like cysteine proteinase">
    <location>
        <begin position="1"/>
        <end position="180"/>
    </location>
</feature>
<feature type="chain" id="PRO_0000036699" description="Nsp1-beta papain-like cysteine proteinase">
    <location>
        <begin position="181"/>
        <end position="383"/>
    </location>
</feature>
<feature type="chain" id="PRO_0000036700" description="Nsp2 cysteine proteinase" evidence="7">
    <location>
        <begin position="384"/>
        <end position="1579"/>
    </location>
</feature>
<feature type="chain" id="PRO_0000036701" description="Non-structural protein 3" evidence="1">
    <location>
        <begin position="1580"/>
        <end position="1809"/>
    </location>
</feature>
<feature type="chain" id="PRO_0000036702" description="Serine protease nsp4" evidence="1">
    <location>
        <begin position="1810"/>
        <end position="2013"/>
    </location>
</feature>
<feature type="chain" id="PRO_0000036703" description="Non-structural protein 5-6-7" evidence="1">
    <location>
        <begin position="2014"/>
        <end position="2458"/>
    </location>
</feature>
<feature type="chain" id="PRO_0000423130" description="Non-structural protein 5" evidence="1">
    <location>
        <begin position="2014"/>
        <end position="2183"/>
    </location>
</feature>
<feature type="chain" id="PRO_0000423131" description="Non-structural protein 6" evidence="1">
    <location>
        <begin position="2184"/>
        <end position="2199"/>
    </location>
</feature>
<feature type="chain" id="PRO_0000423132" description="Non-structural protein 7-alpha" evidence="1">
    <location>
        <begin position="2200"/>
        <end position="2348"/>
    </location>
</feature>
<feature type="chain" id="PRO_0000423133" description="Non-structural protein 7-beta" evidence="1">
    <location>
        <begin position="2349"/>
        <end position="2458"/>
    </location>
</feature>
<feature type="chain" id="PRO_0000036704" description="RNA-directed RNA polymerase" evidence="1">
    <location>
        <begin position="2459"/>
        <end position="3143"/>
    </location>
</feature>
<feature type="chain" id="PRO_0000036705" description="Non-structural protein 8" evidence="1">
    <location>
        <begin position="2459"/>
        <end position="2503"/>
    </location>
</feature>
<feature type="chain" id="PRO_0000036706" description="Helicase nsp10" evidence="1">
    <location>
        <begin position="3144"/>
        <end position="3584"/>
    </location>
</feature>
<feature type="chain" id="PRO_0000036707" description="Uridylate-specific endoribonuclease nsp11" evidence="1">
    <location>
        <begin position="3585"/>
        <end position="3807"/>
    </location>
</feature>
<feature type="chain" id="PRO_0000036708" description="Non-structural protein 12" evidence="1">
    <location>
        <begin position="3808"/>
        <end position="3960"/>
    </location>
</feature>
<feature type="transmembrane region" description="Helical" evidence="7">
    <location>
        <begin position="1266"/>
        <end position="1286"/>
    </location>
</feature>
<feature type="transmembrane region" description="Helical" evidence="7">
    <location>
        <begin position="1296"/>
        <end position="1316"/>
    </location>
</feature>
<feature type="transmembrane region" description="Helical" evidence="7">
    <location>
        <begin position="1345"/>
        <end position="1365"/>
    </location>
</feature>
<feature type="transmembrane region" description="Helical" evidence="7">
    <location>
        <begin position="1368"/>
        <end position="1388"/>
    </location>
</feature>
<feature type="transmembrane region" description="Helical" evidence="7">
    <location>
        <begin position="1583"/>
        <end position="1603"/>
    </location>
</feature>
<feature type="transmembrane region" description="Helical" evidence="7">
    <location>
        <begin position="1650"/>
        <end position="1670"/>
    </location>
</feature>
<feature type="transmembrane region" description="Helical" evidence="7">
    <location>
        <begin position="1685"/>
        <end position="1705"/>
    </location>
</feature>
<feature type="transmembrane region" description="Helical" evidence="7">
    <location>
        <begin position="1719"/>
        <end position="1739"/>
    </location>
</feature>
<feature type="transmembrane region" description="Helical" evidence="7">
    <location>
        <begin position="2012"/>
        <end position="2032"/>
    </location>
</feature>
<feature type="transmembrane region" description="Helical" evidence="7">
    <location>
        <begin position="2060"/>
        <end position="2080"/>
    </location>
</feature>
<feature type="transmembrane region" description="Helical" evidence="7">
    <location>
        <begin position="2092"/>
        <end position="2112"/>
    </location>
</feature>
<feature type="transmembrane region" description="Helical" evidence="7">
    <location>
        <begin position="2137"/>
        <end position="2157"/>
    </location>
</feature>
<feature type="transmembrane region" description="Helical" evidence="7">
    <location>
        <begin position="2164"/>
        <end position="2184"/>
    </location>
</feature>
<feature type="domain" description="Peptidase C31" evidence="11">
    <location>
        <begin position="69"/>
        <end position="180"/>
    </location>
</feature>
<feature type="domain" description="Peptidase C32" evidence="12">
    <location>
        <begin position="263"/>
        <end position="383"/>
    </location>
</feature>
<feature type="domain" description="Peptidase C33" evidence="10">
    <location>
        <begin position="428"/>
        <end position="535"/>
    </location>
</feature>
<feature type="domain" description="Peptidase S32" evidence="9">
    <location>
        <begin position="1810"/>
        <end position="2013"/>
    </location>
</feature>
<feature type="domain" description="NiRAN" evidence="14">
    <location>
        <begin position="2488"/>
        <end position="2650"/>
    </location>
</feature>
<feature type="domain" description="RdRp catalytic" evidence="8">
    <location>
        <begin position="2889"/>
        <end position="3023"/>
    </location>
</feature>
<feature type="domain" description="AV ZBD" evidence="13">
    <location>
        <begin position="3144"/>
        <end position="3207"/>
    </location>
</feature>
<feature type="domain" description="(+)RNA virus helicase ATP-binding">
    <location>
        <begin position="3264"/>
        <end position="3416"/>
    </location>
</feature>
<feature type="domain" description="(+)RNA virus helicase C-terminal">
    <location>
        <begin position="3417"/>
        <end position="3545"/>
    </location>
</feature>
<feature type="domain" description="AV-Nsp11N/CoV-Nsp15M" evidence="16">
    <location>
        <begin position="3584"/>
        <end position="3680"/>
    </location>
</feature>
<feature type="domain" description="NendoU" evidence="15">
    <location>
        <begin position="3682"/>
        <end position="3804"/>
    </location>
</feature>
<feature type="zinc finger region" description="C4-type; atypical">
    <location>
        <begin position="8"/>
        <end position="28"/>
    </location>
</feature>
<feature type="region of interest" description="PCP1-alpha">
    <location>
        <begin position="69"/>
        <end position="182"/>
    </location>
</feature>
<feature type="region of interest" description="Important for host EIF2AK2 inhibition" evidence="3">
    <location>
        <begin position="199"/>
        <end position="200"/>
    </location>
</feature>
<feature type="region of interest" description="PCP1-beta">
    <location>
        <begin position="263"/>
        <end position="382"/>
    </location>
</feature>
<feature type="region of interest" description="OTU-like">
    <location>
        <begin position="426"/>
        <end position="513"/>
    </location>
</feature>
<feature type="region of interest" description="Disordered" evidence="17">
    <location>
        <begin position="809"/>
        <end position="882"/>
    </location>
</feature>
<feature type="region of interest" description="Disordered" evidence="17">
    <location>
        <begin position="899"/>
        <end position="979"/>
    </location>
</feature>
<feature type="region of interest" description="Disordered" evidence="17">
    <location>
        <begin position="1156"/>
        <end position="1213"/>
    </location>
</feature>
<feature type="region of interest" description="HD1">
    <location>
        <begin position="1266"/>
        <end position="1388"/>
    </location>
</feature>
<feature type="region of interest" description="HD2">
    <location>
        <begin position="1583"/>
        <end position="1745"/>
    </location>
</feature>
<feature type="region of interest" description="HD3">
    <location>
        <begin position="2036"/>
        <end position="2157"/>
    </location>
</feature>
<feature type="region of interest" description="Disordered" evidence="17">
    <location>
        <begin position="2329"/>
        <end position="2358"/>
    </location>
</feature>
<feature type="compositionally biased region" description="Pro residues" evidence="17">
    <location>
        <begin position="810"/>
        <end position="819"/>
    </location>
</feature>
<feature type="compositionally biased region" description="Pro residues" evidence="17">
    <location>
        <begin position="2330"/>
        <end position="2344"/>
    </location>
</feature>
<feature type="active site" description="For Nsp1-alpha papain-like cysteine proteinase activity" evidence="11">
    <location>
        <position position="76"/>
    </location>
</feature>
<feature type="active site" description="For Nsp1-alpha papain-like cysteine proteinase activity" evidence="11">
    <location>
        <position position="146"/>
    </location>
</feature>
<feature type="active site" description="For Nsp1-beta papain-like cysteine proteinase activity" evidence="12">
    <location>
        <position position="270"/>
    </location>
</feature>
<feature type="active site" description="For Nsp1-beta papain-like cysteine proteinase activity" evidence="12">
    <location>
        <position position="339"/>
    </location>
</feature>
<feature type="active site" description="For Nsp2 cysteine proteinase activity" evidence="10">
    <location>
        <position position="437"/>
    </location>
</feature>
<feature type="active site" description="For Nsp2 cysteine proteinase activity" evidence="10">
    <location>
        <position position="506"/>
    </location>
</feature>
<feature type="active site" description="Charge relay system; for 3C-like serine proteinase activity" evidence="9">
    <location>
        <position position="1848"/>
    </location>
</feature>
<feature type="active site" description="Charge relay system; for 3C-like serine proteinase activity" evidence="9">
    <location>
        <position position="1873"/>
    </location>
</feature>
<feature type="active site" description="Charge relay system; for 3C-like serine proteinase activity" evidence="9">
    <location>
        <position position="1927"/>
    </location>
</feature>
<feature type="active site" evidence="15">
    <location>
        <position position="3713"/>
    </location>
</feature>
<feature type="active site" evidence="15">
    <location>
        <position position="3728"/>
    </location>
</feature>
<feature type="active site" evidence="15">
    <location>
        <position position="3757"/>
    </location>
</feature>
<feature type="binding site" evidence="13">
    <location>
        <position position="3150"/>
    </location>
    <ligand>
        <name>Zn(2+)</name>
        <dbReference type="ChEBI" id="CHEBI:29105"/>
        <label>1</label>
    </ligand>
</feature>
<feature type="binding site" evidence="13">
    <location>
        <position position="3153"/>
    </location>
    <ligand>
        <name>Zn(2+)</name>
        <dbReference type="ChEBI" id="CHEBI:29105"/>
        <label>1</label>
    </ligand>
</feature>
<feature type="binding site" evidence="13">
    <location>
        <position position="3163"/>
    </location>
    <ligand>
        <name>Zn(2+)</name>
        <dbReference type="ChEBI" id="CHEBI:29105"/>
        <label>2</label>
    </ligand>
</feature>
<feature type="binding site" evidence="13">
    <location>
        <position position="3168"/>
    </location>
    <ligand>
        <name>Zn(2+)</name>
        <dbReference type="ChEBI" id="CHEBI:29105"/>
        <label>1</label>
    </ligand>
</feature>
<feature type="binding site" evidence="13">
    <location>
        <position position="3171"/>
    </location>
    <ligand>
        <name>Zn(2+)</name>
        <dbReference type="ChEBI" id="CHEBI:29105"/>
        <label>1</label>
    </ligand>
</feature>
<feature type="binding site" evidence="13">
    <location>
        <position position="3173"/>
    </location>
    <ligand>
        <name>Zn(2+)</name>
        <dbReference type="ChEBI" id="CHEBI:29105"/>
        <label>2</label>
    </ligand>
</feature>
<feature type="binding site" evidence="13">
    <location>
        <position position="3175"/>
    </location>
    <ligand>
        <name>Zn(2+)</name>
        <dbReference type="ChEBI" id="CHEBI:29105"/>
        <label>2</label>
    </ligand>
</feature>
<feature type="binding site" evidence="13">
    <location>
        <position position="3177"/>
    </location>
    <ligand>
        <name>Zn(2+)</name>
        <dbReference type="ChEBI" id="CHEBI:29105"/>
        <label>2</label>
    </ligand>
</feature>
<feature type="binding site" evidence="13">
    <location>
        <position position="3184"/>
    </location>
    <ligand>
        <name>Zn(2+)</name>
        <dbReference type="ChEBI" id="CHEBI:29105"/>
        <label>3</label>
    </ligand>
</feature>
<feature type="binding site" evidence="13">
    <location>
        <position position="3186"/>
    </location>
    <ligand>
        <name>Zn(2+)</name>
        <dbReference type="ChEBI" id="CHEBI:29105"/>
        <label>3</label>
    </ligand>
</feature>
<feature type="binding site" evidence="13">
    <location>
        <position position="3193"/>
    </location>
    <ligand>
        <name>Zn(2+)</name>
        <dbReference type="ChEBI" id="CHEBI:29105"/>
        <label>3</label>
    </ligand>
</feature>
<feature type="binding site" evidence="13">
    <location>
        <position position="3196"/>
    </location>
    <ligand>
        <name>Zn(2+)</name>
        <dbReference type="ChEBI" id="CHEBI:29105"/>
        <label>3</label>
    </ligand>
</feature>
<feature type="binding site" evidence="1">
    <location>
        <begin position="3292"/>
        <end position="3299"/>
    </location>
    <ligand>
        <name>ATP</name>
        <dbReference type="ChEBI" id="CHEBI:30616"/>
    </ligand>
</feature>
<feature type="site" description="Cleavage; by autolysis" evidence="19">
    <location>
        <begin position="180"/>
        <end position="181"/>
    </location>
</feature>
<feature type="site" description="Cleavage; by autolysis" evidence="19">
    <location>
        <begin position="383"/>
        <end position="384"/>
    </location>
</feature>
<feature type="site" description="Cleavage; by CP2" evidence="2">
    <location>
        <begin position="1579"/>
        <end position="1580"/>
    </location>
</feature>
<feature type="site" description="Cleavage; by 3CLSP" evidence="2">
    <location>
        <begin position="1809"/>
        <end position="1810"/>
    </location>
</feature>
<feature type="site" description="Cleavage; by 3CLSP" evidence="2">
    <location>
        <begin position="2013"/>
        <end position="2014"/>
    </location>
</feature>
<feature type="site" description="Cleavage; by 3CLSP" evidence="2">
    <location>
        <begin position="2183"/>
        <end position="2184"/>
    </location>
</feature>
<feature type="site" description="Cleavage; by 3CLSP" evidence="2">
    <location>
        <begin position="2199"/>
        <end position="2200"/>
    </location>
</feature>
<feature type="site" description="Cleavage; by 3CLSP" evidence="2">
    <location>
        <begin position="2348"/>
        <end position="2349"/>
    </location>
</feature>
<feature type="site" description="Cleavage; by 3CLSP" evidence="2">
    <location>
        <begin position="2458"/>
        <end position="2459"/>
    </location>
</feature>
<feature type="site" description="Cleavage; by 3CLSP" evidence="2">
    <location>
        <begin position="3143"/>
        <end position="3144"/>
    </location>
</feature>
<feature type="site" description="Involved in mRNA transcription process" evidence="1">
    <location>
        <position position="3194"/>
    </location>
</feature>
<feature type="site" description="Cleavage; by 3CLSP" evidence="1">
    <location>
        <begin position="3584"/>
        <end position="3585"/>
    </location>
</feature>
<feature type="site" description="Cleavage; by 3CLSP" evidence="1">
    <location>
        <begin position="3807"/>
        <end position="3808"/>
    </location>
</feature>
<feature type="splice variant" id="VSP_032893" description="In isoform Replicase polyprotein 1a." evidence="23">
    <location>
        <begin position="2504"/>
        <end position="3960"/>
    </location>
</feature>
<feature type="sequence variant" description="In strain: BJ-4.">
    <original>H</original>
    <variation>R</variation>
    <location>
        <position position="188"/>
    </location>
</feature>
<feature type="sequence variant" description="In strain: BJ-4.">
    <original>K</original>
    <variation>R</variation>
    <location>
        <position position="386"/>
    </location>
</feature>
<feature type="sequence variant" description="In strain: BJ-4.">
    <original>S</original>
    <variation>H</variation>
    <location>
        <position position="393"/>
    </location>
</feature>
<feature type="sequence variant" description="In strain: Isolate infectious clone VR-2332.">
    <original>S</original>
    <variation>A</variation>
    <location>
        <position position="1498"/>
    </location>
</feature>
<feature type="sequence variant" description="In strain: Isolate infectious clone VR-2332.">
    <original>T</original>
    <variation>I</variation>
    <location>
        <position position="1777"/>
    </location>
</feature>
<feature type="sequence variant" description="In strain: Isolate infectious clone VR-2332.">
    <original>D</original>
    <variation>N</variation>
    <location>
        <position position="2222"/>
    </location>
</feature>
<feature type="sequence variant" description="In strain: Isolate infectious clone VR-2332.">
    <original>G</original>
    <variation>E</variation>
    <location>
        <position position="3257"/>
    </location>
</feature>
<feature type="sequence variant" description="In strain: Isolate infectious clone VR-2332.">
    <original>C</original>
    <variation>R</variation>
    <location>
        <position position="3539"/>
    </location>
</feature>
<feature type="sequence variant" description="In strain: Isolate infectious clone VR-2332.">
    <original>S</original>
    <variation>T</variation>
    <location>
        <position position="3623"/>
    </location>
</feature>
<feature type="sequence variant" description="In strain: Isolate infectious clone VR-2332.">
    <original>G</original>
    <variation>E</variation>
    <location>
        <position position="3678"/>
    </location>
</feature>
<feature type="sequence variant" description="In strain: Isolate infectious clone VR-2332.">
    <original>G</original>
    <variation>A</variation>
    <location>
        <position position="3714"/>
    </location>
</feature>
<feature type="mutagenesis site" description="Complete loss of papain-like cysteine protease activity of nsp1-alpha. Loss of inhibition of IFN-beta production. Loss of inhibition of IRF-3 phosphorylation." evidence="21">
    <original>C</original>
    <variation>S</variation>
    <location>
        <position position="76"/>
    </location>
</feature>
<feature type="mutagenesis site" description="Complete loss of papain-like cysteine protease activity of nsp1-alpha." evidence="21">
    <original>H</original>
    <variation>D</variation>
    <location>
        <position position="146"/>
    </location>
</feature>
<feature type="mutagenesis site" description="No effect on inhibition of IRF-3 phosphorylation." evidence="21">
    <original>C</original>
    <variation>S</variation>
    <location>
        <position position="270"/>
    </location>
</feature>
<comment type="function">
    <molecule>Replicase polyprotein 1ab</molecule>
    <text>Contains the activities necessary for the transcription of negative stranded RNA, leader RNA, subgenomic mRNAs and progeny virion RNA as well as proteinases responsible for the cleavage of the polyprotein into functional products.</text>
</comment>
<comment type="function">
    <molecule>Nsp1-alpha papain-like cysteine proteinase</molecule>
    <text evidence="6 19 20 21">Inhibits host IFN-beta production (PubMed:20006994, PubMed:20850164, PubMed:21438756). Plays a role in the degradation of the host transcriptional activator CREBBP protein. The degradation of host CREBBP which is a key component of the IFN enhanceosome is likely responsible for the inhibition of interferon mediated by Nsp1-alpha. Also participates in the inhibition of host NF-kappa-B activation by counteracting LUBAC-dependent induction of NF-kappa-B. Reduces host NEMO ubiquitination by blocking the interaction between the two LUBAC complex components RNF31 and SHARPIN (By similarity).</text>
</comment>
<comment type="function">
    <molecule>Nsp1-beta papain-like cysteine proteinase</molecule>
    <text evidence="3 6 19 22">Plays a role in blocking host mRNA nuclear export to the cytoplasm and subversion of host protein synthesis (By similarity). Additionally, inhibits the interferon-activated JAK/STAT signal transduction by mediating the ubiquitination and subsequent proteasomal degradation of host KPNA1 (PubMed:23449802). Repurposes the host antiviral stress granules into a proviral platform to counteract the EIF2AK2/PKR restriction, thereby regulating the host inflammatory response (By similarity).</text>
</comment>
<comment type="function">
    <molecule>Nsp2 cysteine proteinase</molecule>
    <text evidence="18">Multifunctional protein that acts as a viral protease and as a viral antagonist of host immune response. Cleaves the nsp2/nsp3 site in the viral polyprotein. Displays deubiquitinating activity that cleaves both ubiquitinated and ISGylated products and therefore inhibits ubiquitin and ISG15-dependent host innate immunity (PubMed:18078692). Also deubiquinates host NFKBIA, thereby interfering with NFKBIA degradation and impairing subsequent NF-kappa-B activation (PubMed:18078692).</text>
</comment>
<comment type="function">
    <molecule>Non-structural protein 3</molecule>
    <text evidence="6">Plays a role in the inhibition of the immune response by interacting with host IFITM1. This interaction leads to the proteasomal degradation of the IFN-induced antiviral protein IFITM1.</text>
</comment>
<comment type="function">
    <molecule>Serine protease nsp4</molecule>
    <text evidence="6">Cleaves the majority of cleavage sites present in the C-terminus of the polyprotein. Triggers host apoptosis through caspase-3, -8, and -9 activations. Subverts host innate immune responses through its protease activity. Targets the NF-kappa-B essential modulator NEMO and mediates its cleavage. Blocks host interferon beta induction and downstream signaling by cleaving mitochondrial MAVS, dislodging it from the mitochondria. Impairs host defense by cleaving host mRNA-decapping enzyme DCP1A to attenuate its antiviral activity.</text>
</comment>
<comment type="function">
    <molecule>Non-structural protein 5-6-7</molecule>
    <text evidence="6">Plays a role in the initial induction of autophagosomes from host endoplasmic reticulum.</text>
</comment>
<comment type="function">
    <molecule>Non-structural protein 5</molecule>
    <text evidence="6">Plays a role in the inhibition of host STAT3 signaling pathway by inducing the degradation of STAT3.</text>
</comment>
<comment type="function">
    <molecule>RNA-directed RNA polymerase</molecule>
    <text evidence="6">Responsible for replication and transcription of the viral RNA genome.</text>
</comment>
<comment type="function">
    <molecule>Helicase nsp10</molecule>
    <text evidence="6">Displays RNA and DNA duplex-unwinding activities with 5' to 3' polarity.</text>
</comment>
<comment type="function">
    <molecule>Uridylate-specific endoribonuclease nsp11</molecule>
    <text evidence="4 5 6">Plays a role in viral transcription/replication and prevents the simultaneous activation of host cell dsRNA sensors, such as MDA5/IFIH1, OAS, PKR (By similarity) and NLRP3 inflammasome (By similarity). Acts by degrading the 5'-polyuridines generated during replication of the poly(A) region of viral genomic and subgenomic RNAs. Catalyzes a two-step reaction in which a 2'3'-cyclic phosphate (2'3'-cP) is first generated by 2'-O transesterification, which is then hydrolyzed to a 3'-phosphate (3'-P) (By similarity). If not degraded, poly(U) RNA would hybridize with poly(A) RNA tails and activate host dsRNA sensors (By similarity). Also plays a role in the inhibition of host type I interferon production by recruiting host OTULIN to promote removal of linear ubiquitination targeting host NEMO (By similarity).</text>
</comment>
<comment type="catalytic activity">
    <molecule>RNA-directed RNA polymerase</molecule>
    <reaction evidence="8">
        <text>RNA(n) + a ribonucleoside 5'-triphosphate = RNA(n+1) + diphosphate</text>
        <dbReference type="Rhea" id="RHEA:21248"/>
        <dbReference type="Rhea" id="RHEA-COMP:14527"/>
        <dbReference type="Rhea" id="RHEA-COMP:17342"/>
        <dbReference type="ChEBI" id="CHEBI:33019"/>
        <dbReference type="ChEBI" id="CHEBI:61557"/>
        <dbReference type="ChEBI" id="CHEBI:140395"/>
        <dbReference type="EC" id="2.7.7.48"/>
    </reaction>
</comment>
<comment type="catalytic activity">
    <molecule>Helicase nsp10</molecule>
    <reaction evidence="6">
        <text>ATP + H2O = ADP + phosphate + H(+)</text>
        <dbReference type="Rhea" id="RHEA:13065"/>
        <dbReference type="ChEBI" id="CHEBI:15377"/>
        <dbReference type="ChEBI" id="CHEBI:15378"/>
        <dbReference type="ChEBI" id="CHEBI:30616"/>
        <dbReference type="ChEBI" id="CHEBI:43474"/>
        <dbReference type="ChEBI" id="CHEBI:456216"/>
        <dbReference type="EC" id="3.6.4.12"/>
    </reaction>
</comment>
<comment type="catalytic activity">
    <molecule>Helicase nsp10</molecule>
    <reaction evidence="6">
        <text>ATP + H2O = ADP + phosphate + H(+)</text>
        <dbReference type="Rhea" id="RHEA:13065"/>
        <dbReference type="ChEBI" id="CHEBI:15377"/>
        <dbReference type="ChEBI" id="CHEBI:15378"/>
        <dbReference type="ChEBI" id="CHEBI:30616"/>
        <dbReference type="ChEBI" id="CHEBI:43474"/>
        <dbReference type="ChEBI" id="CHEBI:456216"/>
        <dbReference type="EC" id="3.6.4.13"/>
    </reaction>
</comment>
<comment type="catalytic activity">
    <molecule>Nsp2 cysteine proteinase</molecule>
    <reaction evidence="6">
        <text>Thiol-dependent hydrolysis of ester, thioester, amide, peptide and isopeptide bonds formed by the C-terminal Gly of ubiquitin (a 76-residue protein attached to proteins as an intracellular targeting signal).</text>
        <dbReference type="EC" id="3.4.19.12"/>
    </reaction>
</comment>
<comment type="catalytic activity">
    <molecule>Uridylate-specific endoribonuclease nsp11</molecule>
    <reaction evidence="5">
        <text>uridylyl-uridylyl-ribonucleotide-RNA = a 3'-end uridylyl-2',3'-cyclophospho-uridine-RNA + a 5'-end dephospho-ribonucleoside-RNA</text>
        <dbReference type="Rhea" id="RHEA:67732"/>
        <dbReference type="Rhea" id="RHEA-COMP:13936"/>
        <dbReference type="Rhea" id="RHEA-COMP:17334"/>
        <dbReference type="Rhea" id="RHEA-COMP:17335"/>
        <dbReference type="ChEBI" id="CHEBI:138284"/>
        <dbReference type="ChEBI" id="CHEBI:173079"/>
        <dbReference type="ChEBI" id="CHEBI:173080"/>
    </reaction>
</comment>
<comment type="subunit">
    <text evidence="6">Nsp1-alpha papain-like: Interacts with host RNF31.</text>
</comment>
<comment type="subunit">
    <molecule>Nsp1-beta papain-like cysteine proteinase</molecule>
    <text evidence="3">Interacts with host EIF2AK2; this interaction occurs in host stress granules and leads to EIF2AK2 inhibition. Interacts with host G3BP1; this interaction probably plays a role in Nsp1-beta-mediated inhibition of host EIF2AK2.</text>
</comment>
<comment type="subunit">
    <molecule>Nsp2 cysteine proteinase</molecule>
    <text evidence="6">Interacts with host DDX18; this interaction redistributes host DDX18 to the cytoplasm.</text>
</comment>
<comment type="subunit">
    <molecule>Non-structural protein 3</molecule>
    <text evidence="6">Interacts with host IFITM1.</text>
</comment>
<comment type="subunit">
    <molecule>RNA-directed RNA polymerase</molecule>
    <text evidence="6">Interacts with host DDX5.</text>
</comment>
<comment type="subunit">
    <molecule>Helicase nsp10</molecule>
    <text evidence="6">Interacts with host DDX18; this interaction redistributes host DDX18 to the cytoplasm.</text>
</comment>
<comment type="subunit">
    <molecule>Uridylate-specific endoribonuclease nsp11</molecule>
    <text evidence="6">Interacts with host OTULIN.</text>
</comment>
<comment type="subunit">
    <molecule>Non-structural protein 12</molecule>
    <text evidence="6">Interacts with host LGALS3.</text>
</comment>
<comment type="subcellular location">
    <molecule>Nsp1</molecule>
    <subcellularLocation>
        <location evidence="6">Host nucleus</location>
    </subcellularLocation>
    <subcellularLocation>
        <location evidence="6">Host cytoplasm</location>
    </subcellularLocation>
</comment>
<comment type="subcellular location">
    <molecule>Nsp1-alpha papain-like cysteine proteinase</molecule>
    <subcellularLocation>
        <location evidence="20">Host nucleus</location>
    </subcellularLocation>
    <subcellularLocation>
        <location evidence="20">Host cytoplasm</location>
    </subcellularLocation>
</comment>
<comment type="subcellular location">
    <molecule>Nsp1-beta papain-like cysteine proteinase</molecule>
    <subcellularLocation>
        <location evidence="3">Host nucleus</location>
    </subcellularLocation>
    <subcellularLocation>
        <location evidence="3">Host cytoplasm</location>
    </subcellularLocation>
    <text evidence="3">Accumulates mainly in the host cytoplasm in early infection and then mostly in the host nucleus.</text>
</comment>
<comment type="subcellular location">
    <molecule>Nsp2 cysteine proteinase</molecule>
    <subcellularLocation>
        <location evidence="6">Host cytoplasm</location>
    </subcellularLocation>
    <subcellularLocation>
        <location evidence="6">Host membrane</location>
        <topology evidence="6">Multi-pass membrane protein</topology>
    </subcellularLocation>
</comment>
<comment type="subcellular location">
    <molecule>Non-structural protein 5-6-7</molecule>
    <subcellularLocation>
        <location evidence="6">Host endoplasmic reticulum</location>
    </subcellularLocation>
    <subcellularLocation>
        <location evidence="6">Host membrane</location>
        <topology evidence="6">Multi-pass membrane protein</topology>
    </subcellularLocation>
</comment>
<comment type="subcellular location">
    <molecule>Serine protease nsp4</molecule>
    <subcellularLocation>
        <location evidence="6">Host cytoplasm</location>
    </subcellularLocation>
</comment>
<comment type="subcellular location">
    <molecule>RNA-directed RNA polymerase</molecule>
    <subcellularLocation>
        <location evidence="6">Host cytoplasm</location>
    </subcellularLocation>
    <subcellularLocation>
        <location evidence="6">Host cytoplasm</location>
        <location evidence="6">Host perinuclear region</location>
    </subcellularLocation>
</comment>
<comment type="subcellular location">
    <molecule>Helicase nsp10</molecule>
    <subcellularLocation>
        <location evidence="6">Host cytoplasm</location>
    </subcellularLocation>
    <subcellularLocation>
        <location evidence="6">Host cytoplasm</location>
        <location evidence="6">Host perinuclear region</location>
    </subcellularLocation>
</comment>
<comment type="subcellular location">
    <molecule>Uridylate-specific endoribonuclease nsp11</molecule>
    <subcellularLocation>
        <location evidence="6">Host cytoplasm</location>
    </subcellularLocation>
    <subcellularLocation>
        <location evidence="6">Host nucleus</location>
    </subcellularLocation>
</comment>
<comment type="subcellular location">
    <molecule>Non-structural protein 12</molecule>
    <subcellularLocation>
        <location evidence="6">Host cytoplasm</location>
    </subcellularLocation>
</comment>
<comment type="alternative products">
    <event type="ribosomal frameshifting"/>
    <isoform>
        <id>Q9WJB2-1</id>
        <name>Replicase polyprotein 1ab</name>
        <name>pp1ab</name>
        <sequence type="displayed"/>
    </isoform>
    <isoform>
        <id>Q9WJB2-2</id>
        <name>Replicase polyprotein 1a</name>
        <name>pp1a</name>
        <name>ORF1a polyprotein</name>
        <sequence type="described" ref="VSP_032893"/>
    </isoform>
</comment>
<comment type="domain">
    <text evidence="1">The hydrophobic domains (HD) could mediate the membrane association of the replication complex and thereby alter the architecture of the host cell membrane.</text>
</comment>
<comment type="domain">
    <text evidence="1">The OTU-like region is responsible for the deubiquitinating and deISGylation activities of Nsp2.</text>
</comment>
<comment type="PTM">
    <molecule>Replicase polyprotein 1ab</molecule>
    <text evidence="19">Specific enzymatic cleavages in vivo by its own proteases yield mature proteins. Nsp1 is autocleaved into two subunits, Nsp1-alpha and Nsp1-beta. There are two alternative pathways for processing. Either nsp4-5 is cleaved, which represents the major pathway or the nsp5-6 and nsp6-7 are processed, which represents the minor pathway. The major pathway occurs when nsp2 acts as a cofactor for nsp4.</text>
</comment>
<comment type="miscellaneous">
    <molecule>Isoform Replicase polyprotein 1ab</molecule>
    <text>Produced by -1 ribosomal frameshifting at the 1a-1b genes boundary.</text>
</comment>
<comment type="miscellaneous">
    <molecule>Isoform Replicase polyprotein 1a</molecule>
    <text evidence="23">Produced by conventional translation.</text>
</comment>
<comment type="similarity">
    <text evidence="23">Belongs to the arteriviridae polyprotein family.</text>
</comment>
<comment type="sequence caution" evidence="23">
    <conflict type="erroneous initiation">
        <sequence resource="EMBL-CDS" id="AAD12125"/>
    </conflict>
</comment>
<comment type="sequence caution" evidence="23">
    <conflict type="erroneous initiation">
        <sequence resource="EMBL-CDS" id="AAO13192"/>
    </conflict>
</comment>
<organism>
    <name type="scientific">Porcine reproductive and respiratory syndrome virus (strain VR-2332)</name>
    <name type="common">PRRSV</name>
    <dbReference type="NCBI Taxonomy" id="300559"/>
    <lineage>
        <taxon>Viruses</taxon>
        <taxon>Riboviria</taxon>
        <taxon>Orthornavirae</taxon>
        <taxon>Pisuviricota</taxon>
        <taxon>Pisoniviricetes</taxon>
        <taxon>Nidovirales</taxon>
        <taxon>Arnidovirineae</taxon>
        <taxon>Arteriviridae</taxon>
        <taxon>Variarterivirinae</taxon>
        <taxon>Betaarterivirus</taxon>
        <taxon>Ampobartevirus</taxon>
        <taxon>Betaarterivirus americense</taxon>
    </lineage>
</organism>
<gene>
    <name type="primary">rep</name>
    <name type="ORF">1a-1b</name>
</gene>
<dbReference type="EC" id="3.4.22.-"/>
<dbReference type="EC" id="3.4.19.12"/>
<dbReference type="EC" id="3.4.21.-"/>
<dbReference type="EC" id="2.7.7.48"/>
<dbReference type="EC" id="3.6.4.12"/>
<dbReference type="EC" id="3.6.4.13"/>
<dbReference type="EC" id="4.6.1.-"/>
<dbReference type="EMBL" id="U87392">
    <property type="protein sequence ID" value="AAD12132.2"/>
    <property type="molecule type" value="Genomic_RNA"/>
</dbReference>
<dbReference type="EMBL" id="U87392">
    <property type="protein sequence ID" value="AAD12125.1"/>
    <property type="status" value="ALT_INIT"/>
    <property type="molecule type" value="Genomic_RNA"/>
</dbReference>
<dbReference type="EMBL" id="AY150564">
    <property type="protein sequence ID" value="AAO13191.1"/>
    <property type="molecule type" value="Genomic_RNA"/>
</dbReference>
<dbReference type="EMBL" id="AY150564">
    <property type="protein sequence ID" value="AAO13192.1"/>
    <property type="status" value="ALT_INIT"/>
    <property type="molecule type" value="Genomic_RNA"/>
</dbReference>
<dbReference type="SMR" id="Q9WJB2"/>
<dbReference type="MEROPS" id="S32.002"/>
<dbReference type="Proteomes" id="UP000113205">
    <property type="component" value="Segment"/>
</dbReference>
<dbReference type="Proteomes" id="UP000164333">
    <property type="component" value="Genome"/>
</dbReference>
<dbReference type="GO" id="GO:0044165">
    <property type="term" value="C:host cell endoplasmic reticulum"/>
    <property type="evidence" value="ECO:0007669"/>
    <property type="project" value="UniProtKB-SubCell"/>
</dbReference>
<dbReference type="GO" id="GO:0033644">
    <property type="term" value="C:host cell membrane"/>
    <property type="evidence" value="ECO:0007669"/>
    <property type="project" value="UniProtKB-SubCell"/>
</dbReference>
<dbReference type="GO" id="GO:0042025">
    <property type="term" value="C:host cell nucleus"/>
    <property type="evidence" value="ECO:0007669"/>
    <property type="project" value="UniProtKB-SubCell"/>
</dbReference>
<dbReference type="GO" id="GO:0044220">
    <property type="term" value="C:host cell perinuclear region of cytoplasm"/>
    <property type="evidence" value="ECO:0007669"/>
    <property type="project" value="UniProtKB-SubCell"/>
</dbReference>
<dbReference type="GO" id="GO:0016020">
    <property type="term" value="C:membrane"/>
    <property type="evidence" value="ECO:0007669"/>
    <property type="project" value="UniProtKB-KW"/>
</dbReference>
<dbReference type="GO" id="GO:0005524">
    <property type="term" value="F:ATP binding"/>
    <property type="evidence" value="ECO:0007669"/>
    <property type="project" value="UniProtKB-KW"/>
</dbReference>
<dbReference type="GO" id="GO:0016887">
    <property type="term" value="F:ATP hydrolysis activity"/>
    <property type="evidence" value="ECO:0007669"/>
    <property type="project" value="RHEA"/>
</dbReference>
<dbReference type="GO" id="GO:0004843">
    <property type="term" value="F:cysteine-type deubiquitinase activity"/>
    <property type="evidence" value="ECO:0007669"/>
    <property type="project" value="UniProtKB-EC"/>
</dbReference>
<dbReference type="GO" id="GO:0004197">
    <property type="term" value="F:cysteine-type endopeptidase activity"/>
    <property type="evidence" value="ECO:0007669"/>
    <property type="project" value="InterPro"/>
</dbReference>
<dbReference type="GO" id="GO:0004519">
    <property type="term" value="F:endonuclease activity"/>
    <property type="evidence" value="ECO:0007669"/>
    <property type="project" value="UniProtKB-KW"/>
</dbReference>
<dbReference type="GO" id="GO:0016829">
    <property type="term" value="F:lyase activity"/>
    <property type="evidence" value="ECO:0007669"/>
    <property type="project" value="UniProtKB-KW"/>
</dbReference>
<dbReference type="GO" id="GO:0030291">
    <property type="term" value="F:protein serine/threonine kinase inhibitor activity"/>
    <property type="evidence" value="ECO:0007669"/>
    <property type="project" value="UniProtKB-KW"/>
</dbReference>
<dbReference type="GO" id="GO:0003723">
    <property type="term" value="F:RNA binding"/>
    <property type="evidence" value="ECO:0007669"/>
    <property type="project" value="InterPro"/>
</dbReference>
<dbReference type="GO" id="GO:0003724">
    <property type="term" value="F:RNA helicase activity"/>
    <property type="evidence" value="ECO:0007669"/>
    <property type="project" value="UniProtKB-EC"/>
</dbReference>
<dbReference type="GO" id="GO:0004540">
    <property type="term" value="F:RNA nuclease activity"/>
    <property type="evidence" value="ECO:0007669"/>
    <property type="project" value="UniProtKB-ARBA"/>
</dbReference>
<dbReference type="GO" id="GO:0003968">
    <property type="term" value="F:RNA-directed RNA polymerase activity"/>
    <property type="evidence" value="ECO:0007669"/>
    <property type="project" value="UniProtKB-KW"/>
</dbReference>
<dbReference type="GO" id="GO:0004252">
    <property type="term" value="F:serine-type endopeptidase activity"/>
    <property type="evidence" value="ECO:0007669"/>
    <property type="project" value="InterPro"/>
</dbReference>
<dbReference type="GO" id="GO:0008270">
    <property type="term" value="F:zinc ion binding"/>
    <property type="evidence" value="ECO:0007669"/>
    <property type="project" value="UniProtKB-KW"/>
</dbReference>
<dbReference type="GO" id="GO:0006351">
    <property type="term" value="P:DNA-templated transcription"/>
    <property type="evidence" value="ECO:0007669"/>
    <property type="project" value="InterPro"/>
</dbReference>
<dbReference type="GO" id="GO:0006508">
    <property type="term" value="P:proteolysis"/>
    <property type="evidence" value="ECO:0007669"/>
    <property type="project" value="UniProtKB-KW"/>
</dbReference>
<dbReference type="GO" id="GO:0039648">
    <property type="term" value="P:symbiont-mediated perturbation of host ubiquitin-like protein modification"/>
    <property type="evidence" value="ECO:0007669"/>
    <property type="project" value="UniProtKB-KW"/>
</dbReference>
<dbReference type="GO" id="GO:0039579">
    <property type="term" value="P:symbiont-mediated suppression of host ISG15-protein conjugation"/>
    <property type="evidence" value="ECO:0007669"/>
    <property type="project" value="UniProtKB-KW"/>
</dbReference>
<dbReference type="GO" id="GO:0039563">
    <property type="term" value="P:symbiont-mediated suppression of host JAK-STAT cascade via inhibition of STAT1 activity"/>
    <property type="evidence" value="ECO:0007669"/>
    <property type="project" value="UniProtKB-KW"/>
</dbReference>
<dbReference type="GO" id="GO:0085034">
    <property type="term" value="P:symbiont-mediated suppression of host NF-kappaB cascade"/>
    <property type="evidence" value="ECO:0007669"/>
    <property type="project" value="UniProtKB-KW"/>
</dbReference>
<dbReference type="GO" id="GO:0039580">
    <property type="term" value="P:symbiont-mediated suppression of host PKR/eIFalpha signaling"/>
    <property type="evidence" value="ECO:0007669"/>
    <property type="project" value="UniProtKB-KW"/>
</dbReference>
<dbReference type="GO" id="GO:0039502">
    <property type="term" value="P:symbiont-mediated suppression of host type I interferon-mediated signaling pathway"/>
    <property type="evidence" value="ECO:0007669"/>
    <property type="project" value="UniProtKB-KW"/>
</dbReference>
<dbReference type="GO" id="GO:0019082">
    <property type="term" value="P:viral protein processing"/>
    <property type="evidence" value="ECO:0007669"/>
    <property type="project" value="InterPro"/>
</dbReference>
<dbReference type="GO" id="GO:0039694">
    <property type="term" value="P:viral RNA genome replication"/>
    <property type="evidence" value="ECO:0007669"/>
    <property type="project" value="InterPro"/>
</dbReference>
<dbReference type="GO" id="GO:0075523">
    <property type="term" value="P:viral translational frameshifting"/>
    <property type="evidence" value="ECO:0007669"/>
    <property type="project" value="UniProtKB-KW"/>
</dbReference>
<dbReference type="CDD" id="cd21410">
    <property type="entry name" value="1B_av_Nsp10-like"/>
    <property type="match status" value="1"/>
</dbReference>
<dbReference type="CDD" id="cd23189">
    <property type="entry name" value="Arteriviridae_RdRp"/>
    <property type="match status" value="1"/>
</dbReference>
<dbReference type="CDD" id="cd22528">
    <property type="entry name" value="av_Nsp3_ER-remodelling"/>
    <property type="match status" value="1"/>
</dbReference>
<dbReference type="CDD" id="cd17937">
    <property type="entry name" value="DEXXYc_viral_SF1-N"/>
    <property type="match status" value="1"/>
</dbReference>
<dbReference type="CDD" id="cd21160">
    <property type="entry name" value="NendoU_av_Nsp11-like"/>
    <property type="match status" value="1"/>
</dbReference>
<dbReference type="CDD" id="cd21166">
    <property type="entry name" value="NTD_av_Nsp11-like"/>
    <property type="match status" value="1"/>
</dbReference>
<dbReference type="CDD" id="cd18786">
    <property type="entry name" value="SF1_C"/>
    <property type="match status" value="1"/>
</dbReference>
<dbReference type="CDD" id="cd21405">
    <property type="entry name" value="ZBD_av_Nsp10-like"/>
    <property type="match status" value="1"/>
</dbReference>
<dbReference type="Gene3D" id="3.90.70.160">
    <property type="match status" value="1"/>
</dbReference>
<dbReference type="Gene3D" id="4.10.80.390">
    <property type="match status" value="1"/>
</dbReference>
<dbReference type="Gene3D" id="3.30.1330.220">
    <property type="entry name" value="Arterivirus nonstructural protein 7 alpha"/>
    <property type="match status" value="1"/>
</dbReference>
<dbReference type="Gene3D" id="2.30.31.30">
    <property type="entry name" value="Arterivirus nps1beta, nuclease domain"/>
    <property type="match status" value="1"/>
</dbReference>
<dbReference type="Gene3D" id="3.90.70.70">
    <property type="entry name" value="Arterivirus papain-like cysteine protease beta domain"/>
    <property type="match status" value="1"/>
</dbReference>
<dbReference type="Gene3D" id="3.30.40.20">
    <property type="entry name" value="Chymotrypsin-like serine protease, domain 3"/>
    <property type="match status" value="1"/>
</dbReference>
<dbReference type="Gene3D" id="3.40.50.300">
    <property type="entry name" value="P-loop containing nucleotide triphosphate hydrolases"/>
    <property type="match status" value="1"/>
</dbReference>
<dbReference type="Gene3D" id="3.90.70.60">
    <property type="entry name" value="Porcine arterivirus-type cysteine proteinase alpha domain"/>
    <property type="match status" value="1"/>
</dbReference>
<dbReference type="Gene3D" id="2.40.10.10">
    <property type="entry name" value="Trypsin-like serine proteases"/>
    <property type="match status" value="2"/>
</dbReference>
<dbReference type="InterPro" id="IPR027351">
    <property type="entry name" value="(+)RNA_virus_helicase_core_dom"/>
</dbReference>
<dbReference type="InterPro" id="IPR031932">
    <property type="entry name" value="Arteri_nsp7a"/>
</dbReference>
<dbReference type="InterPro" id="IPR038451">
    <property type="entry name" value="Arteri_nsp7a_sf"/>
</dbReference>
<dbReference type="InterPro" id="IPR008743">
    <property type="entry name" value="Arterivirus_Nsp2_C33"/>
</dbReference>
<dbReference type="InterPro" id="IPR023338">
    <property type="entry name" value="Arterivirus_NSP4_peptidase"/>
</dbReference>
<dbReference type="InterPro" id="IPR046440">
    <property type="entry name" value="AV_NSP11N_COV_NSP15M"/>
</dbReference>
<dbReference type="InterPro" id="IPR008741">
    <property type="entry name" value="AV_PCPalpha"/>
</dbReference>
<dbReference type="InterPro" id="IPR038155">
    <property type="entry name" value="AV_PCPalpha_sf"/>
</dbReference>
<dbReference type="InterPro" id="IPR025773">
    <property type="entry name" value="AV_PCPbeta"/>
</dbReference>
<dbReference type="InterPro" id="IPR038154">
    <property type="entry name" value="AV_PCPbeta_sf"/>
</dbReference>
<dbReference type="InterPro" id="IPR023183">
    <property type="entry name" value="Chymotrypsin-like_C"/>
</dbReference>
<dbReference type="InterPro" id="IPR043502">
    <property type="entry name" value="DNA/RNA_pol_sf"/>
</dbReference>
<dbReference type="InterPro" id="IPR008760">
    <property type="entry name" value="EAV_peptidase_S32"/>
</dbReference>
<dbReference type="InterPro" id="IPR037227">
    <property type="entry name" value="EndoU-like"/>
</dbReference>
<dbReference type="InterPro" id="IPR043609">
    <property type="entry name" value="NendoU_nidovirus"/>
</dbReference>
<dbReference type="InterPro" id="IPR044863">
    <property type="entry name" value="NIRAN"/>
</dbReference>
<dbReference type="InterPro" id="IPR044348">
    <property type="entry name" value="NSP10_1B_Av"/>
</dbReference>
<dbReference type="InterPro" id="IPR027355">
    <property type="entry name" value="NSP10_Av_ZBD"/>
</dbReference>
<dbReference type="InterPro" id="IPR044320">
    <property type="entry name" value="NSP11_Av_N"/>
</dbReference>
<dbReference type="InterPro" id="IPR044314">
    <property type="entry name" value="NSP11_NendoU_Av"/>
</dbReference>
<dbReference type="InterPro" id="IPR054104">
    <property type="entry name" value="Nsp1alpha_Znf"/>
</dbReference>
<dbReference type="InterPro" id="IPR032855">
    <property type="entry name" value="NSP2-B_epitope"/>
</dbReference>
<dbReference type="InterPro" id="IPR027417">
    <property type="entry name" value="P-loop_NTPase"/>
</dbReference>
<dbReference type="InterPro" id="IPR032785">
    <property type="entry name" value="Pdase_C33_assoc"/>
</dbReference>
<dbReference type="InterPro" id="IPR009003">
    <property type="entry name" value="Peptidase_S1_PA"/>
</dbReference>
<dbReference type="InterPro" id="IPR043504">
    <property type="entry name" value="Peptidase_S1_PA_chymotrypsin"/>
</dbReference>
<dbReference type="InterPro" id="IPR001205">
    <property type="entry name" value="RNA-dir_pol_C"/>
</dbReference>
<dbReference type="InterPro" id="IPR007094">
    <property type="entry name" value="RNA-dir_pol_PSvirus"/>
</dbReference>
<dbReference type="Pfam" id="PF16749">
    <property type="entry name" value="Arteri_nsp7a"/>
    <property type="match status" value="1"/>
</dbReference>
<dbReference type="Pfam" id="PF19215">
    <property type="entry name" value="CoV_NSP15_C"/>
    <property type="match status" value="1"/>
</dbReference>
<dbReference type="Pfam" id="PF14757">
    <property type="entry name" value="NSP2-B_epitope"/>
    <property type="match status" value="1"/>
</dbReference>
<dbReference type="Pfam" id="PF14756">
    <property type="entry name" value="Pdase_C33_assoc"/>
    <property type="match status" value="1"/>
</dbReference>
<dbReference type="Pfam" id="PF05410">
    <property type="entry name" value="Peptidase_C31"/>
    <property type="match status" value="1"/>
</dbReference>
<dbReference type="Pfam" id="PF05411">
    <property type="entry name" value="Peptidase_C32"/>
    <property type="match status" value="1"/>
</dbReference>
<dbReference type="Pfam" id="PF05412">
    <property type="entry name" value="Peptidase_C33"/>
    <property type="match status" value="1"/>
</dbReference>
<dbReference type="Pfam" id="PF05579">
    <property type="entry name" value="Peptidase_S32"/>
    <property type="match status" value="1"/>
</dbReference>
<dbReference type="Pfam" id="PF22049">
    <property type="entry name" value="PRRSV-NSP11_N"/>
    <property type="match status" value="1"/>
</dbReference>
<dbReference type="Pfam" id="PF00680">
    <property type="entry name" value="RdRP_1"/>
    <property type="match status" value="1"/>
</dbReference>
<dbReference type="Pfam" id="PF01443">
    <property type="entry name" value="Viral_helicase1"/>
    <property type="match status" value="1"/>
</dbReference>
<dbReference type="Pfam" id="PF21905">
    <property type="entry name" value="Zf-Nsp1alpha"/>
    <property type="match status" value="1"/>
</dbReference>
<dbReference type="SUPFAM" id="SSF56672">
    <property type="entry name" value="DNA/RNA polymerases"/>
    <property type="match status" value="1"/>
</dbReference>
<dbReference type="SUPFAM" id="SSF142877">
    <property type="entry name" value="EndoU-like"/>
    <property type="match status" value="1"/>
</dbReference>
<dbReference type="SUPFAM" id="SSF52540">
    <property type="entry name" value="P-loop containing nucleoside triphosphate hydrolases"/>
    <property type="match status" value="2"/>
</dbReference>
<dbReference type="SUPFAM" id="SSF50494">
    <property type="entry name" value="Trypsin-like serine proteases"/>
    <property type="match status" value="1"/>
</dbReference>
<dbReference type="PROSITE" id="PS51538">
    <property type="entry name" value="AV_CP"/>
    <property type="match status" value="1"/>
</dbReference>
<dbReference type="PROSITE" id="PS51961">
    <property type="entry name" value="AV_NSP11N_COV_NSP15M"/>
    <property type="match status" value="1"/>
</dbReference>
<dbReference type="PROSITE" id="PS51493">
    <property type="entry name" value="AV_NSP4_PRO"/>
    <property type="match status" value="1"/>
</dbReference>
<dbReference type="PROSITE" id="PS51539">
    <property type="entry name" value="AV_PCP_ALPHA"/>
    <property type="match status" value="1"/>
</dbReference>
<dbReference type="PROSITE" id="PS51540">
    <property type="entry name" value="AV_PCP_BETA"/>
    <property type="match status" value="1"/>
</dbReference>
<dbReference type="PROSITE" id="PS51652">
    <property type="entry name" value="AV_ZBD"/>
    <property type="match status" value="1"/>
</dbReference>
<dbReference type="PROSITE" id="PS51958">
    <property type="entry name" value="NENDOU"/>
    <property type="match status" value="1"/>
</dbReference>
<dbReference type="PROSITE" id="PS51947">
    <property type="entry name" value="NIRAN"/>
    <property type="match status" value="1"/>
</dbReference>
<dbReference type="PROSITE" id="PS51657">
    <property type="entry name" value="PSRV_HELICASE"/>
    <property type="match status" value="1"/>
</dbReference>
<dbReference type="PROSITE" id="PS50507">
    <property type="entry name" value="RDRP_SSRNA_POS"/>
    <property type="match status" value="1"/>
</dbReference>
<keyword id="KW-0067">ATP-binding</keyword>
<keyword id="KW-0903">Direct protein sequencing</keyword>
<keyword id="KW-0255">Endonuclease</keyword>
<keyword id="KW-0347">Helicase</keyword>
<keyword id="KW-1035">Host cytoplasm</keyword>
<keyword id="KW-1038">Host endoplasmic reticulum</keyword>
<keyword id="KW-1043">Host membrane</keyword>
<keyword id="KW-1048">Host nucleus</keyword>
<keyword id="KW-0945">Host-virus interaction</keyword>
<keyword id="KW-0378">Hydrolase</keyword>
<keyword id="KW-1090">Inhibition of host innate immune response by virus</keyword>
<keyword id="KW-1114">Inhibition of host interferon signaling pathway by virus</keyword>
<keyword id="KW-1095">Inhibition of host ISG15 by virus</keyword>
<keyword id="KW-1100">Inhibition of host NF-kappa-B by virus</keyword>
<keyword id="KW-1102">Inhibition of host PKR by virus</keyword>
<keyword id="KW-1105">Inhibition of host STAT1 by virus</keyword>
<keyword id="KW-0922">Interferon antiviral system evasion</keyword>
<keyword id="KW-0456">Lyase</keyword>
<keyword id="KW-0472">Membrane</keyword>
<keyword id="KW-0479">Metal-binding</keyword>
<keyword id="KW-1127">Modulation of host ubiquitin pathway by viral deubiquitinase</keyword>
<keyword id="KW-1130">Modulation of host ubiquitin pathway by virus</keyword>
<keyword id="KW-0511">Multifunctional enzyme</keyword>
<keyword id="KW-0540">Nuclease</keyword>
<keyword id="KW-0547">Nucleotide-binding</keyword>
<keyword id="KW-0548">Nucleotidyltransferase</keyword>
<keyword id="KW-0645">Protease</keyword>
<keyword id="KW-0688">Ribosomal frameshifting</keyword>
<keyword id="KW-0696">RNA-directed RNA polymerase</keyword>
<keyword id="KW-0720">Serine protease</keyword>
<keyword id="KW-0788">Thiol protease</keyword>
<keyword id="KW-0808">Transferase</keyword>
<keyword id="KW-0812">Transmembrane</keyword>
<keyword id="KW-1133">Transmembrane helix</keyword>
<keyword id="KW-0899">Viral immunoevasion</keyword>
<keyword id="KW-0693">Viral RNA replication</keyword>
<keyword id="KW-0862">Zinc</keyword>
<keyword id="KW-0863">Zinc-finger</keyword>
<accession>Q9WJB2</accession>
<accession>Q80KX0</accession>
<accession>Q80KX1</accession>
<accession>Q9WJB3</accession>
<organismHost>
    <name type="scientific">Sus scrofa</name>
    <name type="common">Pig</name>
    <dbReference type="NCBI Taxonomy" id="9823"/>
</organismHost>